<keyword id="KW-0027">Amidation</keyword>
<keyword id="KW-0878">Amphibian defense peptide</keyword>
<keyword id="KW-0044">Antibiotic</keyword>
<keyword id="KW-0929">Antimicrobial</keyword>
<keyword id="KW-0903">Direct protein sequencing</keyword>
<keyword id="KW-0964">Secreted</keyword>
<comment type="function">
    <text evidence="2 3">Antibacterial peptide with narrow spectrum of activity. Inhibits the formation of NO by neuronal nitric oxide synthase.</text>
</comment>
<comment type="subcellular location">
    <subcellularLocation>
        <location evidence="2">Secreted</location>
    </subcellularLocation>
</comment>
<comment type="tissue specificity">
    <text evidence="2">Expressed by the skin dorsal glands.</text>
</comment>
<comment type="developmental stage">
    <text evidence="3">Expressed during summer.</text>
</comment>
<comment type="similarity">
    <text evidence="1">Belongs to the frog skin active peptide (FSAP) family. Caerin subfamily.</text>
</comment>
<organism>
    <name type="scientific">Litoria rothii</name>
    <name type="common">Roth's tree frog</name>
    <name type="synonym">Hyla rothii</name>
    <dbReference type="NCBI Taxonomy" id="336074"/>
    <lineage>
        <taxon>Eukaryota</taxon>
        <taxon>Metazoa</taxon>
        <taxon>Chordata</taxon>
        <taxon>Craniata</taxon>
        <taxon>Vertebrata</taxon>
        <taxon>Euteleostomi</taxon>
        <taxon>Amphibia</taxon>
        <taxon>Batrachia</taxon>
        <taxon>Anura</taxon>
        <taxon>Neobatrachia</taxon>
        <taxon>Hyloidea</taxon>
        <taxon>Hylidae</taxon>
        <taxon>Pelodryadinae</taxon>
        <taxon>Litoria</taxon>
    </lineage>
</organism>
<reference evidence="5" key="1">
    <citation type="journal article" date="2005" name="Rapid Commun. Mass Spectrom.">
        <title>The rothein peptides from the skin secretion of Roth's tree frog Litoria rothii. Sequence determination using positive and negative ion electrospray mass spectrometry.</title>
        <authorList>
            <person name="Brinkworth C.S."/>
            <person name="Bowie J.H."/>
            <person name="Bilusich D."/>
            <person name="Tyler M.J."/>
        </authorList>
    </citation>
    <scope>PROTEIN SEQUENCE</scope>
    <scope>FUNCTION</scope>
    <scope>IDENTIFICATION BY MASS SPECTROMETRY</scope>
    <scope>SUBCELLULAR LOCATION</scope>
    <scope>TISSUE SPECIFICITY</scope>
    <scope>AMIDATION AT LYS-22</scope>
    <source>
        <tissue evidence="2">Skin secretion</tissue>
    </source>
</reference>
<reference evidence="5" key="2">
    <citation type="journal article" date="2009" name="Toxicon">
        <title>Activities of seasonably variable caerulein and rothein skin peptides from the tree frogs Litoria splendida and Litoria rothii.</title>
        <authorList>
            <person name="Sherman P.J."/>
            <person name="Jackway R.J."/>
            <person name="Nicholson E."/>
            <person name="Musgrave I.F."/>
            <person name="Boontheung P."/>
            <person name="Bowie J.H."/>
        </authorList>
    </citation>
    <scope>FUNCTION</scope>
    <scope>DEVELOPMENTAL STAGE</scope>
</reference>
<protein>
    <recommendedName>
        <fullName evidence="4">Caerin-3.1</fullName>
    </recommendedName>
</protein>
<sequence>GLWQKIKDKASELVSGIVEGVK</sequence>
<dbReference type="GO" id="GO:0005576">
    <property type="term" value="C:extracellular region"/>
    <property type="evidence" value="ECO:0000314"/>
    <property type="project" value="UniProtKB"/>
</dbReference>
<dbReference type="GO" id="GO:0050829">
    <property type="term" value="P:defense response to Gram-negative bacterium"/>
    <property type="evidence" value="ECO:0000314"/>
    <property type="project" value="UniProtKB"/>
</dbReference>
<dbReference type="GO" id="GO:0050830">
    <property type="term" value="P:defense response to Gram-positive bacterium"/>
    <property type="evidence" value="ECO:0000314"/>
    <property type="project" value="UniProtKB"/>
</dbReference>
<dbReference type="GO" id="GO:0051001">
    <property type="term" value="P:negative regulation of nitric-oxide synthase activity"/>
    <property type="evidence" value="ECO:0000314"/>
    <property type="project" value="UniProtKB"/>
</dbReference>
<name>CR31_LITRO</name>
<feature type="peptide" id="PRO_0000394433" description="Caerin-3.1" evidence="2">
    <location>
        <begin position="1"/>
        <end position="22"/>
    </location>
</feature>
<feature type="modified residue" description="Lysine amide" evidence="2">
    <location>
        <position position="22"/>
    </location>
</feature>
<accession>P86505</accession>
<evidence type="ECO:0000255" key="1"/>
<evidence type="ECO:0000269" key="2">
    <source>
    </source>
</evidence>
<evidence type="ECO:0000269" key="3">
    <source>
    </source>
</evidence>
<evidence type="ECO:0000303" key="4">
    <source>
    </source>
</evidence>
<evidence type="ECO:0000305" key="5"/>
<proteinExistence type="evidence at protein level"/>